<comment type="function">
    <text evidence="3">Feruloyl esterase which acts in synergy with xylanases in degradation of plant cell walls. Hydrolyzes the ester linkage of hydroxycinnamic acids (ferulic acid (FA) and p-coumaric acid) and diferulates present in plant cell walls. Is active on substrates containing ferulic acid ester linked to the C-5 and C-2 linkages of arabinofuranose, while it was found capable of de-esterifying acetylated glucuronoxylans. Efficiently releases ferulic acid (FA) from destarched wheat bran when incubated with an M3 xylanase.</text>
</comment>
<comment type="catalytic activity">
    <reaction evidence="3">
        <text>feruloyl-polysaccharide + H2O = ferulate + polysaccharide.</text>
        <dbReference type="EC" id="3.1.1.73"/>
    </reaction>
</comment>
<comment type="biophysicochemical properties">
    <kinetics>
        <KM evidence="3">0.27 mM for methyl ferulate (MFA)</KM>
        <KM evidence="3">0.26 mM for methyl p-coumarate (MpCA)</KM>
        <KM evidence="3">0.18 mM for methyl caffeate (MCA)</KM>
        <KM evidence="3">0.21 mM for methyl sinapate (MSA)</KM>
        <KM evidence="3">2.29 mM for nitrophenyl-5-O-trans-feruloyl-alpha-L-arabinofuranoside</KM>
        <KM evidence="3">2.79 mM for nitrophenyl-2-O-trans-feruloyl-alpha-L-arabinofuranoside</KM>
        <KM evidence="3">2.33 mM for ethyl ferulate</KM>
        <KM evidence="3">1.14 mM for n-propyl ferulate</KM>
        <KM evidence="3">1.4 mM for iso-propyl ferulate</KM>
        <KM evidence="3">0.74 mM for n-butyl ferulate</KM>
        <KM evidence="3">0.65 mM for iso-butyl ferulate</KM>
        <KM evidence="3">0.74 mM for 2-butyl ferulate</KM>
    </kinetics>
    <phDependence>
        <text evidence="3">Optimum pH is 7.0.</text>
    </phDependence>
    <temperatureDependence>
        <text evidence="3">Optimum temperature is 50 degrees Celsius.</text>
    </temperatureDependence>
</comment>
<comment type="subcellular location">
    <subcellularLocation>
        <location evidence="1">Secreted</location>
    </subcellularLocation>
</comment>
<comment type="similarity">
    <text evidence="4">Belongs to the carbohydrate esterase 1 (CE1) family. Feruloyl esterase type B subfamily.</text>
</comment>
<evidence type="ECO:0000250" key="1"/>
<evidence type="ECO:0000255" key="2"/>
<evidence type="ECO:0000269" key="3">
    <source>
    </source>
</evidence>
<evidence type="ECO:0000305" key="4"/>
<gene>
    <name type="primary">Fae1a</name>
    <name type="ORF">MYCTH_96478</name>
</gene>
<proteinExistence type="evidence at protein level"/>
<keyword id="KW-0119">Carbohydrate metabolism</keyword>
<keyword id="KW-0325">Glycoprotein</keyword>
<keyword id="KW-0378">Hydrolase</keyword>
<keyword id="KW-0624">Polysaccharide degradation</keyword>
<keyword id="KW-1185">Reference proteome</keyword>
<keyword id="KW-0964">Secreted</keyword>
<keyword id="KW-0719">Serine esterase</keyword>
<keyword id="KW-0732">Signal</keyword>
<keyword id="KW-0858">Xylan degradation</keyword>
<accession>G2QND5</accession>
<organism>
    <name type="scientific">Thermothelomyces thermophilus (strain ATCC 42464 / BCRC 31852 / DSM 1799)</name>
    <name type="common">Sporotrichum thermophile</name>
    <dbReference type="NCBI Taxonomy" id="573729"/>
    <lineage>
        <taxon>Eukaryota</taxon>
        <taxon>Fungi</taxon>
        <taxon>Dikarya</taxon>
        <taxon>Ascomycota</taxon>
        <taxon>Pezizomycotina</taxon>
        <taxon>Sordariomycetes</taxon>
        <taxon>Sordariomycetidae</taxon>
        <taxon>Sordariales</taxon>
        <taxon>Chaetomiaceae</taxon>
        <taxon>Thermothelomyces</taxon>
    </lineage>
</organism>
<reference key="1">
    <citation type="journal article" date="2011" name="Nat. Biotechnol.">
        <title>Comparative genomic analysis of the thermophilic biomass-degrading fungi Myceliophthora thermophila and Thielavia terrestris.</title>
        <authorList>
            <person name="Berka R.M."/>
            <person name="Grigoriev I.V."/>
            <person name="Otillar R."/>
            <person name="Salamov A."/>
            <person name="Grimwood J."/>
            <person name="Reid I."/>
            <person name="Ishmael N."/>
            <person name="John T."/>
            <person name="Darmond C."/>
            <person name="Moisan M.-C."/>
            <person name="Henrissat B."/>
            <person name="Coutinho P.M."/>
            <person name="Lombard V."/>
            <person name="Natvig D.O."/>
            <person name="Lindquist E."/>
            <person name="Schmutz J."/>
            <person name="Lucas S."/>
            <person name="Harris P."/>
            <person name="Powlowski J."/>
            <person name="Bellemare A."/>
            <person name="Taylor D."/>
            <person name="Butler G."/>
            <person name="de Vries R.P."/>
            <person name="Allijn I.E."/>
            <person name="van den Brink J."/>
            <person name="Ushinsky S."/>
            <person name="Storms R."/>
            <person name="Powell A.J."/>
            <person name="Paulsen I.T."/>
            <person name="Elbourne L.D.H."/>
            <person name="Baker S.E."/>
            <person name="Magnuson J."/>
            <person name="LaBoissiere S."/>
            <person name="Clutterbuck A.J."/>
            <person name="Martinez D."/>
            <person name="Wogulis M."/>
            <person name="de Leon A.L."/>
            <person name="Rey M.W."/>
            <person name="Tsang A."/>
        </authorList>
    </citation>
    <scope>NUCLEOTIDE SEQUENCE [LARGE SCALE GENOMIC DNA]</scope>
    <source>
        <strain>ATCC 42464 / BCRC 31852 / DSM 1799</strain>
    </source>
</reference>
<reference key="2">
    <citation type="journal article" date="2012" name="Appl. Microbiol. Biotechnol.">
        <title>Expression, characterization and structural modelling of a feruloyl esterase from the thermophilic fungus Myceliophthora thermophila.</title>
        <authorList>
            <person name="Topakas E."/>
            <person name="Moukouli M."/>
            <person name="Dimarogona M."/>
            <person name="Christakopoulos P."/>
        </authorList>
    </citation>
    <scope>FUNCTION</scope>
    <scope>CATALYTIC ACTIVITY</scope>
    <scope>BIOPHYSICOCHEMICAL PROPERTIES</scope>
    <scope>MUTAGENESIS OF SER-136</scope>
</reference>
<sequence>MLVRSFLGFAVLAATCLAASLQEVTEFGDNPTNIQMYIYVPDQLDTNPPVIVALHPCGGSAQQWFSGTQLPSYADDNGFILIYPSTPHMSNCWDIQNPDTLTHGQGGDALGIVSMVNYTLDKHSGDSSRVYAMGFSSGGMMTNQLAGSYPDVFEAGAVYSGVAFGCAAGAESATPFSPNQTCAQGLQKTAQEWGDFVRNAYAGYTGRRPRMQIFHGLEDTLVRPQCAEEALKQWSNVLGVELTQEVSGVPSPGWTQKIYGDGTQLQGFFGQGIGHQSTVNEQQLLQWFGLI</sequence>
<name>FAEB_THET4</name>
<protein>
    <recommendedName>
        <fullName>Feruloyl esterase B</fullName>
        <ecNumber>3.1.1.73</ecNumber>
    </recommendedName>
    <alternativeName>
        <fullName>Cinnamoyl esterase</fullName>
    </alternativeName>
    <alternativeName>
        <fullName>Ferulic acid esterase B</fullName>
        <shortName>FAEB</shortName>
    </alternativeName>
</protein>
<feature type="signal peptide" evidence="2">
    <location>
        <begin position="1"/>
        <end position="18"/>
    </location>
</feature>
<feature type="chain" id="PRO_0000419269" description="Feruloyl esterase B">
    <location>
        <begin position="19"/>
        <end position="291"/>
    </location>
</feature>
<feature type="active site" description="Charge relay system">
    <location>
        <position position="136"/>
    </location>
</feature>
<feature type="glycosylation site" description="N-linked (GlcNAc...) asparagine" evidence="2">
    <location>
        <position position="117"/>
    </location>
</feature>
<feature type="glycosylation site" description="N-linked (GlcNAc...) asparagine" evidence="2">
    <location>
        <position position="179"/>
    </location>
</feature>
<feature type="mutagenesis site" description="Impairs catalytic activity." evidence="3">
    <original>S</original>
    <variation>A</variation>
    <location>
        <position position="136"/>
    </location>
</feature>
<dbReference type="EC" id="3.1.1.73"/>
<dbReference type="EMBL" id="CP003008">
    <property type="protein sequence ID" value="AEO62008.1"/>
    <property type="molecule type" value="Genomic_DNA"/>
</dbReference>
<dbReference type="RefSeq" id="XP_003667253.1">
    <property type="nucleotide sequence ID" value="XM_003667205.1"/>
</dbReference>
<dbReference type="SMR" id="G2QND5"/>
<dbReference type="ESTHER" id="myctt-faeb">
    <property type="family name" value="Esterase_phb"/>
</dbReference>
<dbReference type="GlyCosmos" id="G2QND5">
    <property type="glycosylation" value="2 sites, No reported glycans"/>
</dbReference>
<dbReference type="GeneID" id="11509804"/>
<dbReference type="KEGG" id="mtm:MYCTH_96478"/>
<dbReference type="VEuPathDB" id="FungiDB:MYCTH_96478"/>
<dbReference type="eggNOG" id="ENOG502QTDU">
    <property type="taxonomic scope" value="Eukaryota"/>
</dbReference>
<dbReference type="HOGENOM" id="CLU_027551_1_1_1"/>
<dbReference type="InParanoid" id="G2QND5"/>
<dbReference type="OMA" id="PRMQITH"/>
<dbReference type="OrthoDB" id="2425929at2759"/>
<dbReference type="BRENDA" id="3.1.1.73">
    <property type="organism ID" value="5542"/>
</dbReference>
<dbReference type="Proteomes" id="UP000007322">
    <property type="component" value="Chromosome 7"/>
</dbReference>
<dbReference type="GO" id="GO:0005576">
    <property type="term" value="C:extracellular region"/>
    <property type="evidence" value="ECO:0007669"/>
    <property type="project" value="UniProtKB-SubCell"/>
</dbReference>
<dbReference type="GO" id="GO:0030600">
    <property type="term" value="F:feruloyl esterase activity"/>
    <property type="evidence" value="ECO:0007669"/>
    <property type="project" value="UniProtKB-EC"/>
</dbReference>
<dbReference type="GO" id="GO:0045493">
    <property type="term" value="P:xylan catabolic process"/>
    <property type="evidence" value="ECO:0007669"/>
    <property type="project" value="UniProtKB-KW"/>
</dbReference>
<dbReference type="Gene3D" id="3.40.50.1820">
    <property type="entry name" value="alpha/beta hydrolase"/>
    <property type="match status" value="1"/>
</dbReference>
<dbReference type="InterPro" id="IPR029058">
    <property type="entry name" value="AB_hydrolase_fold"/>
</dbReference>
<dbReference type="InterPro" id="IPR010126">
    <property type="entry name" value="Esterase_phb"/>
</dbReference>
<dbReference type="InterPro" id="IPR050955">
    <property type="entry name" value="Plant_Biomass_Hydrol_Est"/>
</dbReference>
<dbReference type="NCBIfam" id="TIGR01840">
    <property type="entry name" value="esterase_phb"/>
    <property type="match status" value="1"/>
</dbReference>
<dbReference type="PANTHER" id="PTHR43037:SF3">
    <property type="entry name" value="FERULOYL ESTERASE B"/>
    <property type="match status" value="1"/>
</dbReference>
<dbReference type="PANTHER" id="PTHR43037">
    <property type="entry name" value="UNNAMED PRODUCT-RELATED"/>
    <property type="match status" value="1"/>
</dbReference>
<dbReference type="Pfam" id="PF10503">
    <property type="entry name" value="Esterase_PHB"/>
    <property type="match status" value="1"/>
</dbReference>
<dbReference type="SUPFAM" id="SSF53474">
    <property type="entry name" value="alpha/beta-Hydrolases"/>
    <property type="match status" value="2"/>
</dbReference>